<comment type="function">
    <text evidence="1">Specifically methylates the pseudouridine at position 1915 (m3Psi1915) in 23S rRNA.</text>
</comment>
<comment type="catalytic activity">
    <reaction evidence="1">
        <text>pseudouridine(1915) in 23S rRNA + S-adenosyl-L-methionine = N(3)-methylpseudouridine(1915) in 23S rRNA + S-adenosyl-L-homocysteine + H(+)</text>
        <dbReference type="Rhea" id="RHEA:42752"/>
        <dbReference type="Rhea" id="RHEA-COMP:10221"/>
        <dbReference type="Rhea" id="RHEA-COMP:10222"/>
        <dbReference type="ChEBI" id="CHEBI:15378"/>
        <dbReference type="ChEBI" id="CHEBI:57856"/>
        <dbReference type="ChEBI" id="CHEBI:59789"/>
        <dbReference type="ChEBI" id="CHEBI:65314"/>
        <dbReference type="ChEBI" id="CHEBI:74486"/>
        <dbReference type="EC" id="2.1.1.177"/>
    </reaction>
</comment>
<comment type="subunit">
    <text evidence="1">Homodimer.</text>
</comment>
<comment type="subcellular location">
    <subcellularLocation>
        <location evidence="1">Cytoplasm</location>
    </subcellularLocation>
</comment>
<comment type="similarity">
    <text evidence="1">Belongs to the RNA methyltransferase RlmH family.</text>
</comment>
<comment type="sequence caution" evidence="2">
    <conflict type="erroneous initiation">
        <sequence resource="EMBL-CDS" id="ABI47229"/>
    </conflict>
</comment>
<accession>Q0I9R7</accession>
<evidence type="ECO:0000255" key="1">
    <source>
        <dbReference type="HAMAP-Rule" id="MF_00658"/>
    </source>
</evidence>
<evidence type="ECO:0000305" key="2"/>
<protein>
    <recommendedName>
        <fullName evidence="1">Ribosomal RNA large subunit methyltransferase H</fullName>
        <ecNumber evidence="1">2.1.1.177</ecNumber>
    </recommendedName>
    <alternativeName>
        <fullName evidence="1">23S rRNA (pseudouridine1915-N3)-methyltransferase</fullName>
    </alternativeName>
    <alternativeName>
        <fullName evidence="1">23S rRNA m3Psi1915 methyltransferase</fullName>
    </alternativeName>
    <alternativeName>
        <fullName evidence="1">rRNA (pseudouridine-N3-)-methyltransferase RlmH</fullName>
    </alternativeName>
</protein>
<gene>
    <name evidence="1" type="primary">rlmH</name>
    <name type="ordered locus">sync_1600</name>
</gene>
<dbReference type="EC" id="2.1.1.177" evidence="1"/>
<dbReference type="EMBL" id="CP000435">
    <property type="protein sequence ID" value="ABI47229.1"/>
    <property type="status" value="ALT_INIT"/>
    <property type="molecule type" value="Genomic_DNA"/>
</dbReference>
<dbReference type="RefSeq" id="WP_041426569.1">
    <property type="nucleotide sequence ID" value="NC_008319.1"/>
</dbReference>
<dbReference type="SMR" id="Q0I9R7"/>
<dbReference type="STRING" id="64471.sync_1600"/>
<dbReference type="KEGG" id="syg:sync_1600"/>
<dbReference type="eggNOG" id="COG1576">
    <property type="taxonomic scope" value="Bacteria"/>
</dbReference>
<dbReference type="HOGENOM" id="CLU_100552_0_0_3"/>
<dbReference type="OrthoDB" id="9806643at2"/>
<dbReference type="Proteomes" id="UP000001961">
    <property type="component" value="Chromosome"/>
</dbReference>
<dbReference type="GO" id="GO:0005737">
    <property type="term" value="C:cytoplasm"/>
    <property type="evidence" value="ECO:0007669"/>
    <property type="project" value="UniProtKB-SubCell"/>
</dbReference>
<dbReference type="GO" id="GO:0070038">
    <property type="term" value="F:rRNA (pseudouridine-N3-)-methyltransferase activity"/>
    <property type="evidence" value="ECO:0007669"/>
    <property type="project" value="UniProtKB-UniRule"/>
</dbReference>
<dbReference type="CDD" id="cd18081">
    <property type="entry name" value="RlmH-like"/>
    <property type="match status" value="1"/>
</dbReference>
<dbReference type="Gene3D" id="3.40.1280.10">
    <property type="match status" value="1"/>
</dbReference>
<dbReference type="HAMAP" id="MF_00658">
    <property type="entry name" value="23SrRNA_methyltr_H"/>
    <property type="match status" value="1"/>
</dbReference>
<dbReference type="InterPro" id="IPR029028">
    <property type="entry name" value="Alpha/beta_knot_MTases"/>
</dbReference>
<dbReference type="InterPro" id="IPR003742">
    <property type="entry name" value="RlmH-like"/>
</dbReference>
<dbReference type="InterPro" id="IPR029026">
    <property type="entry name" value="tRNA_m1G_MTases_N"/>
</dbReference>
<dbReference type="PANTHER" id="PTHR33603">
    <property type="entry name" value="METHYLTRANSFERASE"/>
    <property type="match status" value="1"/>
</dbReference>
<dbReference type="PANTHER" id="PTHR33603:SF1">
    <property type="entry name" value="RIBOSOMAL RNA LARGE SUBUNIT METHYLTRANSFERASE H"/>
    <property type="match status" value="1"/>
</dbReference>
<dbReference type="Pfam" id="PF02590">
    <property type="entry name" value="SPOUT_MTase"/>
    <property type="match status" value="1"/>
</dbReference>
<dbReference type="PIRSF" id="PIRSF004505">
    <property type="entry name" value="MT_bac"/>
    <property type="match status" value="1"/>
</dbReference>
<dbReference type="SUPFAM" id="SSF75217">
    <property type="entry name" value="alpha/beta knot"/>
    <property type="match status" value="1"/>
</dbReference>
<name>RLMH_SYNS3</name>
<proteinExistence type="inferred from homology"/>
<reference key="1">
    <citation type="journal article" date="2006" name="Proc. Natl. Acad. Sci. U.S.A.">
        <title>Genome sequence of Synechococcus CC9311: insights into adaptation to a coastal environment.</title>
        <authorList>
            <person name="Palenik B."/>
            <person name="Ren Q."/>
            <person name="Dupont C.L."/>
            <person name="Myers G.S."/>
            <person name="Heidelberg J.F."/>
            <person name="Badger J.H."/>
            <person name="Madupu R."/>
            <person name="Nelson W.C."/>
            <person name="Brinkac L.M."/>
            <person name="Dodson R.J."/>
            <person name="Durkin A.S."/>
            <person name="Daugherty S.C."/>
            <person name="Sullivan S.A."/>
            <person name="Khouri H."/>
            <person name="Mohamoud Y."/>
            <person name="Halpin R."/>
            <person name="Paulsen I.T."/>
        </authorList>
    </citation>
    <scope>NUCLEOTIDE SEQUENCE [LARGE SCALE GENOMIC DNA]</scope>
    <source>
        <strain>CC9311</strain>
    </source>
</reference>
<feature type="chain" id="PRO_0000260622" description="Ribosomal RNA large subunit methyltransferase H">
    <location>
        <begin position="1"/>
        <end position="144"/>
    </location>
</feature>
<feature type="binding site" evidence="1">
    <location>
        <position position="92"/>
    </location>
    <ligand>
        <name>S-adenosyl-L-methionine</name>
        <dbReference type="ChEBI" id="CHEBI:59789"/>
    </ligand>
</feature>
<feature type="binding site" evidence="1">
    <location>
        <begin position="111"/>
        <end position="116"/>
    </location>
    <ligand>
        <name>S-adenosyl-L-methionine</name>
        <dbReference type="ChEBI" id="CHEBI:59789"/>
    </ligand>
</feature>
<keyword id="KW-0963">Cytoplasm</keyword>
<keyword id="KW-0489">Methyltransferase</keyword>
<keyword id="KW-1185">Reference proteome</keyword>
<keyword id="KW-0698">rRNA processing</keyword>
<keyword id="KW-0949">S-adenosyl-L-methionine</keyword>
<keyword id="KW-0808">Transferase</keyword>
<organism>
    <name type="scientific">Synechococcus sp. (strain CC9311)</name>
    <dbReference type="NCBI Taxonomy" id="64471"/>
    <lineage>
        <taxon>Bacteria</taxon>
        <taxon>Bacillati</taxon>
        <taxon>Cyanobacteriota</taxon>
        <taxon>Cyanophyceae</taxon>
        <taxon>Synechococcales</taxon>
        <taxon>Synechococcaceae</taxon>
        <taxon>Synechococcus</taxon>
    </lineage>
</organism>
<sequence>MNPSRCRIIAIGKVRKSWVQDGIELYRKRLPGLTIVELRDSNPEKEAESIRQTLRRDEWPVMLMEQGETLTSINFSERLRSLGSQRLAFVIGGADGLTAELKALAHWKLSLSPMTFPHELARLLLIEQLFRAQAILQGSPYHRA</sequence>